<feature type="chain" id="PRO_0000255480" description="Small ribosomal subunit protein uS15">
    <location>
        <begin position="1"/>
        <end position="89"/>
    </location>
</feature>
<comment type="function">
    <text evidence="1">One of the primary rRNA binding proteins, it binds directly to 16S rRNA where it helps nucleate assembly of the platform of the 30S subunit by binding and bridging several RNA helices of the 16S rRNA.</text>
</comment>
<comment type="function">
    <text evidence="1">Forms an intersubunit bridge (bridge B4) with the 23S rRNA of the 50S subunit in the ribosome.</text>
</comment>
<comment type="subunit">
    <text evidence="1">Part of the 30S ribosomal subunit. Forms a bridge to the 50S subunit in the 70S ribosome, contacting the 23S rRNA.</text>
</comment>
<comment type="similarity">
    <text evidence="1">Belongs to the universal ribosomal protein uS15 family.</text>
</comment>
<reference key="1">
    <citation type="submission" date="2006-05" db="EMBL/GenBank/DDBJ databases">
        <title>Complete sequence of chromosome 1 of Burkholderia cenocepacia AU 1054.</title>
        <authorList>
            <consortium name="US DOE Joint Genome Institute"/>
            <person name="Copeland A."/>
            <person name="Lucas S."/>
            <person name="Lapidus A."/>
            <person name="Barry K."/>
            <person name="Detter J.C."/>
            <person name="Glavina del Rio T."/>
            <person name="Hammon N."/>
            <person name="Israni S."/>
            <person name="Dalin E."/>
            <person name="Tice H."/>
            <person name="Pitluck S."/>
            <person name="Chain P."/>
            <person name="Malfatti S."/>
            <person name="Shin M."/>
            <person name="Vergez L."/>
            <person name="Schmutz J."/>
            <person name="Larimer F."/>
            <person name="Land M."/>
            <person name="Hauser L."/>
            <person name="Kyrpides N."/>
            <person name="Lykidis A."/>
            <person name="LiPuma J.J."/>
            <person name="Konstantinidis K."/>
            <person name="Tiedje J.M."/>
            <person name="Richardson P."/>
        </authorList>
    </citation>
    <scope>NUCLEOTIDE SEQUENCE [LARGE SCALE GENOMIC DNA]</scope>
    <source>
        <strain>AU 1054</strain>
    </source>
</reference>
<dbReference type="EMBL" id="CP000378">
    <property type="protein sequence ID" value="ABF76547.1"/>
    <property type="molecule type" value="Genomic_DNA"/>
</dbReference>
<dbReference type="SMR" id="Q1BV08"/>
<dbReference type="HOGENOM" id="CLU_148518_0_0_4"/>
<dbReference type="GO" id="GO:0022627">
    <property type="term" value="C:cytosolic small ribosomal subunit"/>
    <property type="evidence" value="ECO:0007669"/>
    <property type="project" value="TreeGrafter"/>
</dbReference>
<dbReference type="GO" id="GO:0019843">
    <property type="term" value="F:rRNA binding"/>
    <property type="evidence" value="ECO:0007669"/>
    <property type="project" value="UniProtKB-UniRule"/>
</dbReference>
<dbReference type="GO" id="GO:0003735">
    <property type="term" value="F:structural constituent of ribosome"/>
    <property type="evidence" value="ECO:0007669"/>
    <property type="project" value="InterPro"/>
</dbReference>
<dbReference type="GO" id="GO:0006412">
    <property type="term" value="P:translation"/>
    <property type="evidence" value="ECO:0007669"/>
    <property type="project" value="UniProtKB-UniRule"/>
</dbReference>
<dbReference type="CDD" id="cd00353">
    <property type="entry name" value="Ribosomal_S15p_S13e"/>
    <property type="match status" value="1"/>
</dbReference>
<dbReference type="FunFam" id="1.10.287.10:FF:000002">
    <property type="entry name" value="30S ribosomal protein S15"/>
    <property type="match status" value="1"/>
</dbReference>
<dbReference type="Gene3D" id="6.10.250.3130">
    <property type="match status" value="1"/>
</dbReference>
<dbReference type="Gene3D" id="1.10.287.10">
    <property type="entry name" value="S15/NS1, RNA-binding"/>
    <property type="match status" value="1"/>
</dbReference>
<dbReference type="HAMAP" id="MF_01343_B">
    <property type="entry name" value="Ribosomal_uS15_B"/>
    <property type="match status" value="1"/>
</dbReference>
<dbReference type="InterPro" id="IPR000589">
    <property type="entry name" value="Ribosomal_uS15"/>
</dbReference>
<dbReference type="InterPro" id="IPR005290">
    <property type="entry name" value="Ribosomal_uS15_bac-type"/>
</dbReference>
<dbReference type="InterPro" id="IPR009068">
    <property type="entry name" value="uS15_NS1_RNA-bd_sf"/>
</dbReference>
<dbReference type="NCBIfam" id="TIGR00952">
    <property type="entry name" value="S15_bact"/>
    <property type="match status" value="1"/>
</dbReference>
<dbReference type="PANTHER" id="PTHR23321">
    <property type="entry name" value="RIBOSOMAL PROTEIN S15, BACTERIAL AND ORGANELLAR"/>
    <property type="match status" value="1"/>
</dbReference>
<dbReference type="PANTHER" id="PTHR23321:SF26">
    <property type="entry name" value="SMALL RIBOSOMAL SUBUNIT PROTEIN US15M"/>
    <property type="match status" value="1"/>
</dbReference>
<dbReference type="Pfam" id="PF00312">
    <property type="entry name" value="Ribosomal_S15"/>
    <property type="match status" value="1"/>
</dbReference>
<dbReference type="SMART" id="SM01387">
    <property type="entry name" value="Ribosomal_S15"/>
    <property type="match status" value="1"/>
</dbReference>
<dbReference type="SUPFAM" id="SSF47060">
    <property type="entry name" value="S15/NS1 RNA-binding domain"/>
    <property type="match status" value="1"/>
</dbReference>
<dbReference type="PROSITE" id="PS00362">
    <property type="entry name" value="RIBOSOMAL_S15"/>
    <property type="match status" value="1"/>
</dbReference>
<evidence type="ECO:0000255" key="1">
    <source>
        <dbReference type="HAMAP-Rule" id="MF_01343"/>
    </source>
</evidence>
<evidence type="ECO:0000305" key="2"/>
<name>RS15_BURO1</name>
<keyword id="KW-0687">Ribonucleoprotein</keyword>
<keyword id="KW-0689">Ribosomal protein</keyword>
<keyword id="KW-0694">RNA-binding</keyword>
<keyword id="KW-0699">rRNA-binding</keyword>
<protein>
    <recommendedName>
        <fullName evidence="1">Small ribosomal subunit protein uS15</fullName>
    </recommendedName>
    <alternativeName>
        <fullName evidence="2">30S ribosomal protein S15</fullName>
    </alternativeName>
</protein>
<organism>
    <name type="scientific">Burkholderia orbicola (strain AU 1054)</name>
    <dbReference type="NCBI Taxonomy" id="331271"/>
    <lineage>
        <taxon>Bacteria</taxon>
        <taxon>Pseudomonadati</taxon>
        <taxon>Pseudomonadota</taxon>
        <taxon>Betaproteobacteria</taxon>
        <taxon>Burkholderiales</taxon>
        <taxon>Burkholderiaceae</taxon>
        <taxon>Burkholderia</taxon>
        <taxon>Burkholderia cepacia complex</taxon>
        <taxon>Burkholderia orbicola</taxon>
    </lineage>
</organism>
<proteinExistence type="inferred from homology"/>
<sequence>MSVADIKKSEVVAQFARGTNDTGSPEVQVALLTARIVELTGHFKTHAKDHHSRRGLLRMVSRRRKLLDYLKGKDADRYRALIEKLGLRK</sequence>
<gene>
    <name evidence="1" type="primary">rpsO</name>
    <name type="ordered locus">Bcen_1642</name>
</gene>
<accession>Q1BV08</accession>